<name>ARGR_CLOBJ</name>
<feature type="chain" id="PRO_1000123789" description="Arginine repressor">
    <location>
        <begin position="1"/>
        <end position="150"/>
    </location>
</feature>
<organism>
    <name type="scientific">Clostridium botulinum (strain Kyoto / Type A2)</name>
    <dbReference type="NCBI Taxonomy" id="536232"/>
    <lineage>
        <taxon>Bacteria</taxon>
        <taxon>Bacillati</taxon>
        <taxon>Bacillota</taxon>
        <taxon>Clostridia</taxon>
        <taxon>Eubacteriales</taxon>
        <taxon>Clostridiaceae</taxon>
        <taxon>Clostridium</taxon>
    </lineage>
</organism>
<dbReference type="EMBL" id="CP001581">
    <property type="protein sequence ID" value="ACO86567.1"/>
    <property type="molecule type" value="Genomic_DNA"/>
</dbReference>
<dbReference type="RefSeq" id="WP_003358895.1">
    <property type="nucleotide sequence ID" value="NC_012563.1"/>
</dbReference>
<dbReference type="SMR" id="C1FPA5"/>
<dbReference type="KEGG" id="cby:CLM_2095"/>
<dbReference type="eggNOG" id="COG1438">
    <property type="taxonomic scope" value="Bacteria"/>
</dbReference>
<dbReference type="HOGENOM" id="CLU_097103_3_0_9"/>
<dbReference type="UniPathway" id="UPA00068"/>
<dbReference type="Proteomes" id="UP000001374">
    <property type="component" value="Chromosome"/>
</dbReference>
<dbReference type="GO" id="GO:0005737">
    <property type="term" value="C:cytoplasm"/>
    <property type="evidence" value="ECO:0007669"/>
    <property type="project" value="UniProtKB-SubCell"/>
</dbReference>
<dbReference type="GO" id="GO:0034618">
    <property type="term" value="F:arginine binding"/>
    <property type="evidence" value="ECO:0007669"/>
    <property type="project" value="InterPro"/>
</dbReference>
<dbReference type="GO" id="GO:0003677">
    <property type="term" value="F:DNA binding"/>
    <property type="evidence" value="ECO:0007669"/>
    <property type="project" value="UniProtKB-KW"/>
</dbReference>
<dbReference type="GO" id="GO:0003700">
    <property type="term" value="F:DNA-binding transcription factor activity"/>
    <property type="evidence" value="ECO:0007669"/>
    <property type="project" value="UniProtKB-UniRule"/>
</dbReference>
<dbReference type="GO" id="GO:0006526">
    <property type="term" value="P:L-arginine biosynthetic process"/>
    <property type="evidence" value="ECO:0007669"/>
    <property type="project" value="UniProtKB-UniPathway"/>
</dbReference>
<dbReference type="GO" id="GO:0051259">
    <property type="term" value="P:protein complex oligomerization"/>
    <property type="evidence" value="ECO:0007669"/>
    <property type="project" value="InterPro"/>
</dbReference>
<dbReference type="GO" id="GO:1900079">
    <property type="term" value="P:regulation of arginine biosynthetic process"/>
    <property type="evidence" value="ECO:0007669"/>
    <property type="project" value="UniProtKB-UniRule"/>
</dbReference>
<dbReference type="Gene3D" id="3.30.1360.40">
    <property type="match status" value="1"/>
</dbReference>
<dbReference type="Gene3D" id="1.10.10.10">
    <property type="entry name" value="Winged helix-like DNA-binding domain superfamily/Winged helix DNA-binding domain"/>
    <property type="match status" value="1"/>
</dbReference>
<dbReference type="HAMAP" id="MF_00173">
    <property type="entry name" value="Arg_repressor"/>
    <property type="match status" value="1"/>
</dbReference>
<dbReference type="InterPro" id="IPR001669">
    <property type="entry name" value="Arg_repress"/>
</dbReference>
<dbReference type="InterPro" id="IPR020899">
    <property type="entry name" value="Arg_repress_C"/>
</dbReference>
<dbReference type="InterPro" id="IPR036251">
    <property type="entry name" value="Arg_repress_C_sf"/>
</dbReference>
<dbReference type="InterPro" id="IPR020900">
    <property type="entry name" value="Arg_repress_DNA-bd"/>
</dbReference>
<dbReference type="InterPro" id="IPR036388">
    <property type="entry name" value="WH-like_DNA-bd_sf"/>
</dbReference>
<dbReference type="InterPro" id="IPR036390">
    <property type="entry name" value="WH_DNA-bd_sf"/>
</dbReference>
<dbReference type="NCBIfam" id="TIGR01529">
    <property type="entry name" value="argR_whole"/>
    <property type="match status" value="1"/>
</dbReference>
<dbReference type="NCBIfam" id="NF001680">
    <property type="entry name" value="PRK00441.1"/>
    <property type="match status" value="1"/>
</dbReference>
<dbReference type="PANTHER" id="PTHR34471">
    <property type="entry name" value="ARGININE REPRESSOR"/>
    <property type="match status" value="1"/>
</dbReference>
<dbReference type="PANTHER" id="PTHR34471:SF1">
    <property type="entry name" value="ARGININE REPRESSOR"/>
    <property type="match status" value="1"/>
</dbReference>
<dbReference type="Pfam" id="PF01316">
    <property type="entry name" value="Arg_repressor"/>
    <property type="match status" value="1"/>
</dbReference>
<dbReference type="Pfam" id="PF02863">
    <property type="entry name" value="Arg_repressor_C"/>
    <property type="match status" value="1"/>
</dbReference>
<dbReference type="PRINTS" id="PR01467">
    <property type="entry name" value="ARGREPRESSOR"/>
</dbReference>
<dbReference type="SUPFAM" id="SSF55252">
    <property type="entry name" value="C-terminal domain of arginine repressor"/>
    <property type="match status" value="1"/>
</dbReference>
<dbReference type="SUPFAM" id="SSF46785">
    <property type="entry name" value="Winged helix' DNA-binding domain"/>
    <property type="match status" value="1"/>
</dbReference>
<keyword id="KW-0028">Amino-acid biosynthesis</keyword>
<keyword id="KW-0055">Arginine biosynthesis</keyword>
<keyword id="KW-0963">Cytoplasm</keyword>
<keyword id="KW-0238">DNA-binding</keyword>
<keyword id="KW-0678">Repressor</keyword>
<keyword id="KW-0804">Transcription</keyword>
<keyword id="KW-0805">Transcription regulation</keyword>
<sequence>MKVSRHAKILEIINSKDIDTQEELAEELKKMGMNVTQATVSRDIKELKLIKVLGNTGKYKYATINHTESYMSDKLISIFAQTVISVENIDKLIIIKTISGSAPGAGEAIDTLGFDGIAGTIAGDNTIFAMTRTNEKAQEITLKLKKIINA</sequence>
<proteinExistence type="inferred from homology"/>
<evidence type="ECO:0000255" key="1">
    <source>
        <dbReference type="HAMAP-Rule" id="MF_00173"/>
    </source>
</evidence>
<reference key="1">
    <citation type="submission" date="2008-10" db="EMBL/GenBank/DDBJ databases">
        <title>Genome sequence of Clostridium botulinum A2 Kyoto.</title>
        <authorList>
            <person name="Shrivastava S."/>
            <person name="Brinkac L.M."/>
            <person name="Brown J.L."/>
            <person name="Bruce D."/>
            <person name="Detter C.C."/>
            <person name="Johnson E.A."/>
            <person name="Munk C.A."/>
            <person name="Smith L.A."/>
            <person name="Smith T.J."/>
            <person name="Sutton G."/>
            <person name="Brettin T.S."/>
        </authorList>
    </citation>
    <scope>NUCLEOTIDE SEQUENCE [LARGE SCALE GENOMIC DNA]</scope>
    <source>
        <strain>Kyoto / Type A2</strain>
    </source>
</reference>
<gene>
    <name evidence="1" type="primary">argR</name>
    <name type="ordered locus">CLM_2095</name>
</gene>
<comment type="function">
    <text evidence="1">Regulates arginine biosynthesis genes.</text>
</comment>
<comment type="pathway">
    <text>Amino-acid biosynthesis; L-arginine biosynthesis [regulation].</text>
</comment>
<comment type="subcellular location">
    <subcellularLocation>
        <location evidence="1">Cytoplasm</location>
    </subcellularLocation>
</comment>
<comment type="similarity">
    <text evidence="1">Belongs to the ArgR family.</text>
</comment>
<protein>
    <recommendedName>
        <fullName evidence="1">Arginine repressor</fullName>
    </recommendedName>
</protein>
<accession>C1FPA5</accession>